<dbReference type="EC" id="1.14.13.239" evidence="1 3"/>
<dbReference type="EMBL" id="CP002177">
    <property type="protein sequence ID" value="ADY80707.1"/>
    <property type="molecule type" value="Genomic_DNA"/>
</dbReference>
<dbReference type="RefSeq" id="WP_014205962.1">
    <property type="nucleotide sequence ID" value="NC_016603.1"/>
</dbReference>
<dbReference type="RefSeq" id="YP_004994389.1">
    <property type="nucleotide sequence ID" value="NC_016603.1"/>
</dbReference>
<dbReference type="SMR" id="F0KFI7"/>
<dbReference type="STRING" id="871585.BDGL_000121"/>
<dbReference type="GeneID" id="11638296"/>
<dbReference type="KEGG" id="acc:BDGL_000121"/>
<dbReference type="PATRIC" id="fig|871585.3.peg.120"/>
<dbReference type="eggNOG" id="COG1018">
    <property type="taxonomic scope" value="Bacteria"/>
</dbReference>
<dbReference type="HOGENOM" id="CLU_003827_17_0_6"/>
<dbReference type="OrthoDB" id="9801223at2"/>
<dbReference type="BioCyc" id="MetaCyc:MONOMER-8605"/>
<dbReference type="UniPathway" id="UPA00117"/>
<dbReference type="Proteomes" id="UP000007477">
    <property type="component" value="Chromosome"/>
</dbReference>
<dbReference type="GO" id="GO:0051537">
    <property type="term" value="F:2 iron, 2 sulfur cluster binding"/>
    <property type="evidence" value="ECO:0007669"/>
    <property type="project" value="UniProtKB-UniRule"/>
</dbReference>
<dbReference type="GO" id="GO:0046872">
    <property type="term" value="F:metal ion binding"/>
    <property type="evidence" value="ECO:0007669"/>
    <property type="project" value="UniProtKB-KW"/>
</dbReference>
<dbReference type="GO" id="GO:0016709">
    <property type="term" value="F:oxidoreductase activity, acting on paired donors, with incorporation or reduction of molecular oxygen, NAD(P)H as one donor, and incorporation of one atom of oxygen"/>
    <property type="evidence" value="ECO:0007669"/>
    <property type="project" value="UniProtKB-UniRule"/>
</dbReference>
<dbReference type="GO" id="GO:0009437">
    <property type="term" value="P:carnitine metabolic process"/>
    <property type="evidence" value="ECO:0007669"/>
    <property type="project" value="UniProtKB-UniRule"/>
</dbReference>
<dbReference type="CDD" id="cd00207">
    <property type="entry name" value="fer2"/>
    <property type="match status" value="1"/>
</dbReference>
<dbReference type="CDD" id="cd06185">
    <property type="entry name" value="PDR_like"/>
    <property type="match status" value="1"/>
</dbReference>
<dbReference type="Gene3D" id="3.10.20.30">
    <property type="match status" value="1"/>
</dbReference>
<dbReference type="Gene3D" id="3.40.50.80">
    <property type="entry name" value="Nucleotide-binding domain of ferredoxin-NADP reductase (FNR) module"/>
    <property type="match status" value="1"/>
</dbReference>
<dbReference type="Gene3D" id="2.40.30.10">
    <property type="entry name" value="Translation factors"/>
    <property type="match status" value="1"/>
</dbReference>
<dbReference type="HAMAP" id="MF_02098">
    <property type="entry name" value="Carnitine_monoox_B"/>
    <property type="match status" value="1"/>
</dbReference>
<dbReference type="InterPro" id="IPR036010">
    <property type="entry name" value="2Fe-2S_ferredoxin-like_sf"/>
</dbReference>
<dbReference type="InterPro" id="IPR001041">
    <property type="entry name" value="2Fe-2S_ferredoxin-type"/>
</dbReference>
<dbReference type="InterPro" id="IPR006058">
    <property type="entry name" value="2Fe2S_fd_BS"/>
</dbReference>
<dbReference type="InterPro" id="IPR052353">
    <property type="entry name" value="Benzoxazolinone_Detox_Enz"/>
</dbReference>
<dbReference type="InterPro" id="IPR012675">
    <property type="entry name" value="Beta-grasp_dom_sf"/>
</dbReference>
<dbReference type="InterPro" id="IPR039003">
    <property type="entry name" value="Carnitine_monoox_B"/>
</dbReference>
<dbReference type="InterPro" id="IPR054582">
    <property type="entry name" value="DmmA-like_N"/>
</dbReference>
<dbReference type="InterPro" id="IPR017927">
    <property type="entry name" value="FAD-bd_FR_type"/>
</dbReference>
<dbReference type="InterPro" id="IPR039261">
    <property type="entry name" value="FNR_nucleotide-bd"/>
</dbReference>
<dbReference type="InterPro" id="IPR017938">
    <property type="entry name" value="Riboflavin_synthase-like_b-brl"/>
</dbReference>
<dbReference type="PANTHER" id="PTHR30212">
    <property type="entry name" value="PROTEIN YIIM"/>
    <property type="match status" value="1"/>
</dbReference>
<dbReference type="PANTHER" id="PTHR30212:SF2">
    <property type="entry name" value="PROTEIN YIIM"/>
    <property type="match status" value="1"/>
</dbReference>
<dbReference type="Pfam" id="PF22290">
    <property type="entry name" value="DmmA-like_N"/>
    <property type="match status" value="1"/>
</dbReference>
<dbReference type="Pfam" id="PF00111">
    <property type="entry name" value="Fer2"/>
    <property type="match status" value="1"/>
</dbReference>
<dbReference type="PRINTS" id="PR00409">
    <property type="entry name" value="PHDIOXRDTASE"/>
</dbReference>
<dbReference type="SUPFAM" id="SSF54292">
    <property type="entry name" value="2Fe-2S ferredoxin-like"/>
    <property type="match status" value="1"/>
</dbReference>
<dbReference type="SUPFAM" id="SSF52343">
    <property type="entry name" value="Ferredoxin reductase-like, C-terminal NADP-linked domain"/>
    <property type="match status" value="1"/>
</dbReference>
<dbReference type="SUPFAM" id="SSF63380">
    <property type="entry name" value="Riboflavin synthase domain-like"/>
    <property type="match status" value="1"/>
</dbReference>
<dbReference type="PROSITE" id="PS00197">
    <property type="entry name" value="2FE2S_FER_1"/>
    <property type="match status" value="1"/>
</dbReference>
<dbReference type="PROSITE" id="PS51085">
    <property type="entry name" value="2FE2S_FER_2"/>
    <property type="match status" value="1"/>
</dbReference>
<dbReference type="PROSITE" id="PS51384">
    <property type="entry name" value="FAD_FR"/>
    <property type="match status" value="1"/>
</dbReference>
<sequence>MEQLTPLIKRFTFKRQDGQNFPRFSGGSHIIVKMNEQISNAYSLMSCTQDLSTYQVCVRKDVEGKGGSVFMHDQCNEGCEIQISEPKNLFPLAETGNKHILIAGGIGITPFLPQMDELAARGADFELHYAYRSPEHAALLDELKQKHAKHVFSYVDSEGCSLKLDELISSQPKGTHVYVCGPKPMIDAVIDCCNKHRYRDEYIHWEQFASTVPEDGEAFTVVLAKSNQEIEVQSNQTILQAIETLNIDVECLCREGVCGTCETAILEGEADHFDQYLSDAEKASQKSMMICVSRAKGKKLVLDL</sequence>
<reference key="1">
    <citation type="journal article" date="2011" name="J. Bacteriol.">
        <title>Genome sequence of Acinetobacter calcoaceticus PHEA-2, isolated from industry wastewater.</title>
        <authorList>
            <person name="Zhan Y."/>
            <person name="Yan Y."/>
            <person name="Zhang W."/>
            <person name="Yu H."/>
            <person name="Chen M."/>
            <person name="Lu W."/>
            <person name="Ping S."/>
            <person name="Peng Z."/>
            <person name="Yuan M."/>
            <person name="Zhou Z."/>
            <person name="Elmerich C."/>
            <person name="Lin M."/>
        </authorList>
    </citation>
    <scope>NUCLEOTIDE SEQUENCE [LARGE SCALE GENOMIC DNA]</scope>
    <source>
        <strain>PHEA-2</strain>
    </source>
</reference>
<reference key="2">
    <citation type="journal article" date="1994" name="Bioorg. Med. Chem.">
        <title>L-carnitine via enzyme-catalyzed oxidative kinetic resolution.</title>
        <authorList>
            <person name="Ditullio D."/>
            <person name="Anderson D."/>
            <person name="Chen C.S."/>
            <person name="Sih C.J."/>
        </authorList>
    </citation>
    <scope>FUNCTION</scope>
    <scope>CATALYTIC ACTIVITY</scope>
    <scope>ACTIVITY REGULATION</scope>
    <scope>PATHWAY</scope>
    <source>
        <strain>ATCC 39648</strain>
    </source>
</reference>
<feature type="chain" id="PRO_0000442689" description="Carnitine monooxygenase reductase subunit">
    <location>
        <begin position="1"/>
        <end position="304"/>
    </location>
</feature>
<feature type="domain" description="FAD-binding FR-type" evidence="1">
    <location>
        <begin position="1"/>
        <end position="93"/>
    </location>
</feature>
<feature type="domain" description="2Fe-2S ferredoxin-type" evidence="2">
    <location>
        <begin position="219"/>
        <end position="304"/>
    </location>
</feature>
<feature type="binding site" evidence="1">
    <location>
        <position position="253"/>
    </location>
    <ligand>
        <name>[2Fe-2S] cluster</name>
        <dbReference type="ChEBI" id="CHEBI:190135"/>
    </ligand>
</feature>
<feature type="binding site" evidence="1">
    <location>
        <position position="258"/>
    </location>
    <ligand>
        <name>[2Fe-2S] cluster</name>
        <dbReference type="ChEBI" id="CHEBI:190135"/>
    </ligand>
</feature>
<feature type="binding site" evidence="1">
    <location>
        <position position="261"/>
    </location>
    <ligand>
        <name>[2Fe-2S] cluster</name>
        <dbReference type="ChEBI" id="CHEBI:190135"/>
    </ligand>
</feature>
<feature type="binding site" evidence="1">
    <location>
        <position position="291"/>
    </location>
    <ligand>
        <name>[2Fe-2S] cluster</name>
        <dbReference type="ChEBI" id="CHEBI:190135"/>
    </ligand>
</feature>
<keyword id="KW-0001">2Fe-2S</keyword>
<keyword id="KW-0285">Flavoprotein</keyword>
<keyword id="KW-0288">FMN</keyword>
<keyword id="KW-0408">Iron</keyword>
<keyword id="KW-0411">Iron-sulfur</keyword>
<keyword id="KW-0479">Metal-binding</keyword>
<keyword id="KW-0520">NAD</keyword>
<keyword id="KW-0521">NADP</keyword>
<keyword id="KW-0560">Oxidoreductase</keyword>
<keyword id="KW-1185">Reference proteome</keyword>
<comment type="function">
    <text evidence="3">Converts carnitine to trimethylamine and malic semialdehyde. Acts on both enantiomers.</text>
</comment>
<comment type="catalytic activity">
    <reaction evidence="1 3">
        <text>(R)-carnitine + NADH + O2 + H(+) = (3R)-3-hydroxy-4-oxobutanoate + trimethylamine + NAD(+) + H2O</text>
        <dbReference type="Rhea" id="RHEA:55396"/>
        <dbReference type="ChEBI" id="CHEBI:15377"/>
        <dbReference type="ChEBI" id="CHEBI:15378"/>
        <dbReference type="ChEBI" id="CHEBI:15379"/>
        <dbReference type="ChEBI" id="CHEBI:16347"/>
        <dbReference type="ChEBI" id="CHEBI:57540"/>
        <dbReference type="ChEBI" id="CHEBI:57945"/>
        <dbReference type="ChEBI" id="CHEBI:58389"/>
        <dbReference type="ChEBI" id="CHEBI:138809"/>
        <dbReference type="EC" id="1.14.13.239"/>
    </reaction>
</comment>
<comment type="catalytic activity">
    <reaction evidence="1 3">
        <text>(R)-carnitine + NADPH + O2 + H(+) = (3R)-3-hydroxy-4-oxobutanoate + trimethylamine + NADP(+) + H2O</text>
        <dbReference type="Rhea" id="RHEA:55368"/>
        <dbReference type="ChEBI" id="CHEBI:15377"/>
        <dbReference type="ChEBI" id="CHEBI:15378"/>
        <dbReference type="ChEBI" id="CHEBI:15379"/>
        <dbReference type="ChEBI" id="CHEBI:16347"/>
        <dbReference type="ChEBI" id="CHEBI:57783"/>
        <dbReference type="ChEBI" id="CHEBI:58349"/>
        <dbReference type="ChEBI" id="CHEBI:58389"/>
        <dbReference type="ChEBI" id="CHEBI:138809"/>
        <dbReference type="EC" id="1.14.13.239"/>
    </reaction>
</comment>
<comment type="cofactor">
    <cofactor evidence="1">
        <name>FMN</name>
        <dbReference type="ChEBI" id="CHEBI:58210"/>
    </cofactor>
</comment>
<comment type="cofactor">
    <cofactor evidence="1">
        <name>[2Fe-2S] cluster</name>
        <dbReference type="ChEBI" id="CHEBI:190135"/>
    </cofactor>
    <text evidence="1">Binds 1 2Fe-2S cluster.</text>
</comment>
<comment type="activity regulation">
    <text evidence="3">Inhibited by EDTA.</text>
</comment>
<comment type="pathway">
    <text evidence="1 3">Amine and polyamine metabolism; carnitine metabolism.</text>
</comment>
<comment type="subunit">
    <text evidence="1">Composed of an oxygenase subunit and a reductase subunit.</text>
</comment>
<comment type="similarity">
    <text evidence="1 4">Belongs to the PDR/VanB family. CntB subfamily.</text>
</comment>
<organism>
    <name type="scientific">Acinetobacter pittii (strain PHEA-2)</name>
    <dbReference type="NCBI Taxonomy" id="871585"/>
    <lineage>
        <taxon>Bacteria</taxon>
        <taxon>Pseudomonadati</taxon>
        <taxon>Pseudomonadota</taxon>
        <taxon>Gammaproteobacteria</taxon>
        <taxon>Moraxellales</taxon>
        <taxon>Moraxellaceae</taxon>
        <taxon>Acinetobacter</taxon>
        <taxon>Acinetobacter calcoaceticus/baumannii complex</taxon>
    </lineage>
</organism>
<name>CNTB_ACIP2</name>
<proteinExistence type="evidence at protein level"/>
<accession>F0KFI7</accession>
<protein>
    <recommendedName>
        <fullName evidence="1 4">Carnitine monooxygenase reductase subunit</fullName>
        <ecNumber evidence="1 3">1.14.13.239</ecNumber>
    </recommendedName>
    <alternativeName>
        <fullName evidence="1 4">Carnitine monooxygenase beta subunit</fullName>
    </alternativeName>
</protein>
<gene>
    <name evidence="5" type="primary">yeaX</name>
    <name evidence="5" type="ordered locus">BDGL_000121</name>
</gene>
<evidence type="ECO:0000255" key="1">
    <source>
        <dbReference type="HAMAP-Rule" id="MF_02098"/>
    </source>
</evidence>
<evidence type="ECO:0000255" key="2">
    <source>
        <dbReference type="PROSITE-ProRule" id="PRU00465"/>
    </source>
</evidence>
<evidence type="ECO:0000269" key="3">
    <source>
    </source>
</evidence>
<evidence type="ECO:0000305" key="4"/>
<evidence type="ECO:0000312" key="5">
    <source>
        <dbReference type="EMBL" id="ADY80707.1"/>
    </source>
</evidence>